<organism>
    <name type="scientific">Arabidopsis thaliana</name>
    <name type="common">Mouse-ear cress</name>
    <dbReference type="NCBI Taxonomy" id="3702"/>
    <lineage>
        <taxon>Eukaryota</taxon>
        <taxon>Viridiplantae</taxon>
        <taxon>Streptophyta</taxon>
        <taxon>Embryophyta</taxon>
        <taxon>Tracheophyta</taxon>
        <taxon>Spermatophyta</taxon>
        <taxon>Magnoliopsida</taxon>
        <taxon>eudicotyledons</taxon>
        <taxon>Gunneridae</taxon>
        <taxon>Pentapetalae</taxon>
        <taxon>rosids</taxon>
        <taxon>malvids</taxon>
        <taxon>Brassicales</taxon>
        <taxon>Brassicaceae</taxon>
        <taxon>Camelineae</taxon>
        <taxon>Arabidopsis</taxon>
    </lineage>
</organism>
<reference key="1">
    <citation type="journal article" date="2004" name="Development">
        <title>Expression dynamics of WOX genes mark cell fate decisions during early embryonic patterning in Arabidopsis thaliana.</title>
        <authorList>
            <person name="Haecker A."/>
            <person name="Gross-Hardt R."/>
            <person name="Geiges B."/>
            <person name="Sarkar A."/>
            <person name="Breuninger H."/>
            <person name="Herrmann M."/>
            <person name="Laux T."/>
        </authorList>
    </citation>
    <scope>NUCLEOTIDE SEQUENCE [MRNA]</scope>
    <source>
        <strain>cv. Landsberg erecta</strain>
    </source>
</reference>
<reference key="2">
    <citation type="journal article" date="2000" name="Nature">
        <title>Sequence and analysis of chromosome 1 of the plant Arabidopsis thaliana.</title>
        <authorList>
            <person name="Theologis A."/>
            <person name="Ecker J.R."/>
            <person name="Palm C.J."/>
            <person name="Federspiel N.A."/>
            <person name="Kaul S."/>
            <person name="White O."/>
            <person name="Alonso J."/>
            <person name="Altafi H."/>
            <person name="Araujo R."/>
            <person name="Bowman C.L."/>
            <person name="Brooks S.Y."/>
            <person name="Buehler E."/>
            <person name="Chan A."/>
            <person name="Chao Q."/>
            <person name="Chen H."/>
            <person name="Cheuk R.F."/>
            <person name="Chin C.W."/>
            <person name="Chung M.K."/>
            <person name="Conn L."/>
            <person name="Conway A.B."/>
            <person name="Conway A.R."/>
            <person name="Creasy T.H."/>
            <person name="Dewar K."/>
            <person name="Dunn P."/>
            <person name="Etgu P."/>
            <person name="Feldblyum T.V."/>
            <person name="Feng J.-D."/>
            <person name="Fong B."/>
            <person name="Fujii C.Y."/>
            <person name="Gill J.E."/>
            <person name="Goldsmith A.D."/>
            <person name="Haas B."/>
            <person name="Hansen N.F."/>
            <person name="Hughes B."/>
            <person name="Huizar L."/>
            <person name="Hunter J.L."/>
            <person name="Jenkins J."/>
            <person name="Johnson-Hopson C."/>
            <person name="Khan S."/>
            <person name="Khaykin E."/>
            <person name="Kim C.J."/>
            <person name="Koo H.L."/>
            <person name="Kremenetskaia I."/>
            <person name="Kurtz D.B."/>
            <person name="Kwan A."/>
            <person name="Lam B."/>
            <person name="Langin-Hooper S."/>
            <person name="Lee A."/>
            <person name="Lee J.M."/>
            <person name="Lenz C.A."/>
            <person name="Li J.H."/>
            <person name="Li Y.-P."/>
            <person name="Lin X."/>
            <person name="Liu S.X."/>
            <person name="Liu Z.A."/>
            <person name="Luros J.S."/>
            <person name="Maiti R."/>
            <person name="Marziali A."/>
            <person name="Militscher J."/>
            <person name="Miranda M."/>
            <person name="Nguyen M."/>
            <person name="Nierman W.C."/>
            <person name="Osborne B.I."/>
            <person name="Pai G."/>
            <person name="Peterson J."/>
            <person name="Pham P.K."/>
            <person name="Rizzo M."/>
            <person name="Rooney T."/>
            <person name="Rowley D."/>
            <person name="Sakano H."/>
            <person name="Salzberg S.L."/>
            <person name="Schwartz J.R."/>
            <person name="Shinn P."/>
            <person name="Southwick A.M."/>
            <person name="Sun H."/>
            <person name="Tallon L.J."/>
            <person name="Tambunga G."/>
            <person name="Toriumi M.J."/>
            <person name="Town C.D."/>
            <person name="Utterback T."/>
            <person name="Van Aken S."/>
            <person name="Vaysberg M."/>
            <person name="Vysotskaia V.S."/>
            <person name="Walker M."/>
            <person name="Wu D."/>
            <person name="Yu G."/>
            <person name="Fraser C.M."/>
            <person name="Venter J.C."/>
            <person name="Davis R.W."/>
        </authorList>
    </citation>
    <scope>NUCLEOTIDE SEQUENCE [LARGE SCALE GENOMIC DNA]</scope>
    <source>
        <strain>cv. Columbia</strain>
    </source>
</reference>
<reference key="3">
    <citation type="journal article" date="2017" name="Plant J.">
        <title>Araport11: a complete reannotation of the Arabidopsis thaliana reference genome.</title>
        <authorList>
            <person name="Cheng C.Y."/>
            <person name="Krishnakumar V."/>
            <person name="Chan A.P."/>
            <person name="Thibaud-Nissen F."/>
            <person name="Schobel S."/>
            <person name="Town C.D."/>
        </authorList>
    </citation>
    <scope>GENOME REANNOTATION</scope>
    <source>
        <strain>cv. Columbia</strain>
    </source>
</reference>
<reference key="4">
    <citation type="submission" date="2003-12" db="EMBL/GenBank/DDBJ databases">
        <authorList>
            <person name="Shinn P."/>
            <person name="Chen H."/>
            <person name="Cheuk R.F."/>
            <person name="Kim C.J."/>
            <person name="Ecker J.R."/>
        </authorList>
    </citation>
    <scope>NUCLEOTIDE SEQUENCE [LARGE SCALE MRNA]</scope>
</reference>
<reference key="5">
    <citation type="journal article" date="2010" name="Plant Cell">
        <title>TDIF peptide signaling regulates vascular stem cell proliferation via the WOX4 homeobox gene in Arabidopsis.</title>
        <authorList>
            <person name="Hirakawa Y."/>
            <person name="Kondo Y."/>
            <person name="Fukuda H."/>
        </authorList>
    </citation>
    <scope>FUNCTION</scope>
    <scope>SUBCELLULAR LOCATION</scope>
    <scope>TISSUE SPECIFICITY</scope>
    <scope>DISRUPTION PHENOTYPE</scope>
</reference>
<reference key="6">
    <citation type="journal article" date="2010" name="Plant Physiol.">
        <title>WOX4 promotes procambial development.</title>
        <authorList>
            <person name="Ji J."/>
            <person name="Strable J."/>
            <person name="Shimizu R."/>
            <person name="Koenig D."/>
            <person name="Sinha N."/>
            <person name="Scanlon M.J."/>
        </authorList>
    </citation>
    <scope>FUNCTION</scope>
    <scope>TISSUE SPECIFICITY</scope>
</reference>
<reference key="7">
    <citation type="journal article" date="2011" name="Plant Cell">
        <title>WOX4 imparts auxin responsiveness to cambium cells in Arabidopsis.</title>
        <authorList>
            <person name="Suer S."/>
            <person name="Agusti J."/>
            <person name="Sanchez P."/>
            <person name="Schwarz M."/>
            <person name="Greb T."/>
        </authorList>
    </citation>
    <scope>FUNCTION</scope>
</reference>
<reference key="8">
    <citation type="journal article" date="2013" name="Development">
        <title>WOX4 and WOX14 act downstream of the PXY receptor kinase to regulate plant vascular proliferation independently of any role in vascular organisation.</title>
        <authorList>
            <person name="Etchells J.P."/>
            <person name="Provost C.M."/>
            <person name="Mishra L."/>
            <person name="Turner S.R."/>
        </authorList>
    </citation>
    <scope>FUNCTION</scope>
    <scope>DISRUPTION PHENOTYPE</scope>
</reference>
<protein>
    <recommendedName>
        <fullName>WUSCHEL-related homeobox 4</fullName>
    </recommendedName>
</protein>
<proteinExistence type="evidence at protein level"/>
<keyword id="KW-0217">Developmental protein</keyword>
<keyword id="KW-0238">DNA-binding</keyword>
<keyword id="KW-0371">Homeobox</keyword>
<keyword id="KW-0539">Nucleus</keyword>
<keyword id="KW-1185">Reference proteome</keyword>
<keyword id="KW-0804">Transcription</keyword>
<keyword id="KW-0805">Transcription regulation</keyword>
<evidence type="ECO:0000255" key="1">
    <source>
        <dbReference type="PROSITE-ProRule" id="PRU00108"/>
    </source>
</evidence>
<evidence type="ECO:0000256" key="2">
    <source>
        <dbReference type="SAM" id="MobiDB-lite"/>
    </source>
</evidence>
<evidence type="ECO:0000269" key="3">
    <source>
    </source>
</evidence>
<evidence type="ECO:0000269" key="4">
    <source>
    </source>
</evidence>
<evidence type="ECO:0000269" key="5">
    <source>
    </source>
</evidence>
<evidence type="ECO:0000269" key="6">
    <source>
    </source>
</evidence>
<evidence type="ECO:0000305" key="7"/>
<gene>
    <name type="primary">WOX4</name>
    <name type="ordered locus">At1g46480</name>
    <name type="ORF">F2G19.11</name>
</gene>
<sequence length="251" mass="28675">MKVHEFSNGFSSSWDQHDSTSSLSLSCKRLRPLAPKLSGSPPSPPSSSSGVTSATFDLKNFIRPDQTGPTKFEHKRDPPHQLETHPGGTRWNPTQEQIGILEMLYKGGMRTPNAQQIEHITLQLGKYGKIEGKNVFYWFQNHKARERQKQKRNNLISLSCQSSFTTTGVFNPSVTMKTRTSSSLDIMREPMVEKEELVEENEYKRTCRSWGFENLEIENRRNKNSSTMATTFNKIIDNVTLELFPLHPEGR</sequence>
<dbReference type="EMBL" id="AY251396">
    <property type="protein sequence ID" value="AAP37134.1"/>
    <property type="molecule type" value="mRNA"/>
</dbReference>
<dbReference type="EMBL" id="AC083835">
    <property type="protein sequence ID" value="AAG50620.1"/>
    <property type="molecule type" value="Genomic_DNA"/>
</dbReference>
<dbReference type="EMBL" id="CP002684">
    <property type="protein sequence ID" value="AEE32127.1"/>
    <property type="molecule type" value="Genomic_DNA"/>
</dbReference>
<dbReference type="EMBL" id="BT010692">
    <property type="protein sequence ID" value="AAR20749.1"/>
    <property type="molecule type" value="mRNA"/>
</dbReference>
<dbReference type="EMBL" id="BT010974">
    <property type="protein sequence ID" value="AAR24752.1"/>
    <property type="molecule type" value="mRNA"/>
</dbReference>
<dbReference type="PIR" id="F96511">
    <property type="entry name" value="F96511"/>
</dbReference>
<dbReference type="RefSeq" id="NP_175145.2">
    <property type="nucleotide sequence ID" value="NM_103605.7"/>
</dbReference>
<dbReference type="SMR" id="Q6X7J9"/>
<dbReference type="BioGRID" id="26338">
    <property type="interactions" value="48"/>
</dbReference>
<dbReference type="FunCoup" id="Q6X7J9">
    <property type="interactions" value="469"/>
</dbReference>
<dbReference type="IntAct" id="Q6X7J9">
    <property type="interactions" value="45"/>
</dbReference>
<dbReference type="STRING" id="3702.Q6X7J9"/>
<dbReference type="GlyGen" id="Q6X7J9">
    <property type="glycosylation" value="1 site, 1 O-linked glycan (1 site)"/>
</dbReference>
<dbReference type="PaxDb" id="3702-AT1G46480.1"/>
<dbReference type="ProteomicsDB" id="242721"/>
<dbReference type="EnsemblPlants" id="AT1G46480.1">
    <property type="protein sequence ID" value="AT1G46480.1"/>
    <property type="gene ID" value="AT1G46480"/>
</dbReference>
<dbReference type="GeneID" id="841113"/>
<dbReference type="Gramene" id="AT1G46480.1">
    <property type="protein sequence ID" value="AT1G46480.1"/>
    <property type="gene ID" value="AT1G46480"/>
</dbReference>
<dbReference type="KEGG" id="ath:AT1G46480"/>
<dbReference type="Araport" id="AT1G46480"/>
<dbReference type="TAIR" id="AT1G46480">
    <property type="gene designation" value="WOX4"/>
</dbReference>
<dbReference type="eggNOG" id="ENOG502R34Q">
    <property type="taxonomic scope" value="Eukaryota"/>
</dbReference>
<dbReference type="HOGENOM" id="CLU_106029_0_0_1"/>
<dbReference type="InParanoid" id="Q6X7J9"/>
<dbReference type="OMA" id="NDVIRRD"/>
<dbReference type="OrthoDB" id="768142at2759"/>
<dbReference type="PhylomeDB" id="Q6X7J9"/>
<dbReference type="PRO" id="PR:Q6X7J9"/>
<dbReference type="Proteomes" id="UP000006548">
    <property type="component" value="Chromosome 1"/>
</dbReference>
<dbReference type="ExpressionAtlas" id="Q6X7J9">
    <property type="expression patterns" value="baseline and differential"/>
</dbReference>
<dbReference type="GO" id="GO:0005634">
    <property type="term" value="C:nucleus"/>
    <property type="evidence" value="ECO:0000314"/>
    <property type="project" value="TAIR"/>
</dbReference>
<dbReference type="GO" id="GO:0003677">
    <property type="term" value="F:DNA binding"/>
    <property type="evidence" value="ECO:0007669"/>
    <property type="project" value="UniProtKB-KW"/>
</dbReference>
<dbReference type="GO" id="GO:0003700">
    <property type="term" value="F:DNA-binding transcription factor activity"/>
    <property type="evidence" value="ECO:0007669"/>
    <property type="project" value="InterPro"/>
</dbReference>
<dbReference type="GO" id="GO:0051301">
    <property type="term" value="P:cell division"/>
    <property type="evidence" value="ECO:0000315"/>
    <property type="project" value="TAIR"/>
</dbReference>
<dbReference type="GO" id="GO:0010087">
    <property type="term" value="P:phloem or xylem histogenesis"/>
    <property type="evidence" value="ECO:0000315"/>
    <property type="project" value="TAIR"/>
</dbReference>
<dbReference type="GO" id="GO:0010067">
    <property type="term" value="P:procambium histogenesis"/>
    <property type="evidence" value="ECO:0000315"/>
    <property type="project" value="TAIR"/>
</dbReference>
<dbReference type="GO" id="GO:0007165">
    <property type="term" value="P:signal transduction"/>
    <property type="evidence" value="ECO:0000270"/>
    <property type="project" value="TAIR"/>
</dbReference>
<dbReference type="CDD" id="cd00086">
    <property type="entry name" value="homeodomain"/>
    <property type="match status" value="1"/>
</dbReference>
<dbReference type="FunFam" id="1.10.10.60:FF:000146">
    <property type="entry name" value="WUSCHEL-related homeobox 4"/>
    <property type="match status" value="1"/>
</dbReference>
<dbReference type="Gene3D" id="1.10.10.60">
    <property type="entry name" value="Homeodomain-like"/>
    <property type="match status" value="1"/>
</dbReference>
<dbReference type="InterPro" id="IPR001356">
    <property type="entry name" value="HD"/>
</dbReference>
<dbReference type="InterPro" id="IPR009057">
    <property type="entry name" value="Homeodomain-like_sf"/>
</dbReference>
<dbReference type="InterPro" id="IPR044186">
    <property type="entry name" value="WOX4"/>
</dbReference>
<dbReference type="PANTHER" id="PTHR47716">
    <property type="entry name" value="WUSCHEL-RELATED HOMEOBOX 4"/>
    <property type="match status" value="1"/>
</dbReference>
<dbReference type="PANTHER" id="PTHR47716:SF1">
    <property type="entry name" value="WUSCHEL-RELATED HOMEOBOX 4"/>
    <property type="match status" value="1"/>
</dbReference>
<dbReference type="Pfam" id="PF00046">
    <property type="entry name" value="Homeodomain"/>
    <property type="match status" value="1"/>
</dbReference>
<dbReference type="SMART" id="SM00389">
    <property type="entry name" value="HOX"/>
    <property type="match status" value="1"/>
</dbReference>
<dbReference type="SUPFAM" id="SSF46689">
    <property type="entry name" value="Homeodomain-like"/>
    <property type="match status" value="1"/>
</dbReference>
<dbReference type="PROSITE" id="PS50071">
    <property type="entry name" value="HOMEOBOX_2"/>
    <property type="match status" value="1"/>
</dbReference>
<comment type="function">
    <text evidence="3 4 5 6">Promotes differentiation and/or maintenance of the vascular procambium, the initial cells of the developing vasculature (PubMed:20044450). Part of the TDIF-TDR-WOX4 signaling pathway that plays a crucial role in the maintenance of the vascular meristem organization during secondary growth (PubMed:20729381). Is required for promoting the proliferation of procambial/cambial stem cells but not for repressing their commitment to xylem differentiation in response to the TDIF signal (PubMed:20729381). Acts redundantly with WOX14 downstream of the TDR/PXY receptor kinase to regulate procambial cell proliferation and differentiation in vascular tissue, independently of any role in vascular (PubMed:23578929). Acts as a cambium regulator in the inflorescence stem (PubMed:21926336). Is required for auxin-dependent cambium stimulation in the inflorescence stem (PubMed:21926336).</text>
</comment>
<comment type="interaction">
    <interactant intactId="EBI-4459694">
        <id>Q6X7J9</id>
    </interactant>
    <interactant intactId="EBI-15191535">
        <id>O80748</id>
        <label>BBX26</label>
    </interactant>
    <organismsDiffer>false</organismsDiffer>
    <experiments>3</experiments>
</comment>
<comment type="interaction">
    <interactant intactId="EBI-4459694">
        <id>Q6X7J9</id>
    </interactant>
    <interactant intactId="EBI-15195807">
        <id>Q9SVX5</id>
        <label>DREB2F</label>
    </interactant>
    <organismsDiffer>false</organismsDiffer>
    <experiments>3</experiments>
</comment>
<comment type="interaction">
    <interactant intactId="EBI-4459694">
        <id>Q6X7J9</id>
    </interactant>
    <interactant intactId="EBI-4448729">
        <id>Q9ZVC9</id>
        <label>FRS3</label>
    </interactant>
    <organismsDiffer>false</organismsDiffer>
    <experiments>3</experiments>
</comment>
<comment type="interaction">
    <interactant intactId="EBI-4459694">
        <id>Q6X7J9</id>
    </interactant>
    <interactant intactId="EBI-9348720">
        <id>Q9SDW0</id>
        <label>GT-3A</label>
    </interactant>
    <organismsDiffer>false</organismsDiffer>
    <experiments>3</experiments>
</comment>
<comment type="interaction">
    <interactant intactId="EBI-4459694">
        <id>Q6X7J9</id>
    </interactant>
    <interactant intactId="EBI-3133327">
        <id>O82277</id>
        <label>TCP10</label>
    </interactant>
    <organismsDiffer>false</organismsDiffer>
    <experiments>3</experiments>
</comment>
<comment type="interaction">
    <interactant intactId="EBI-4459694">
        <id>Q6X7J9</id>
    </interactant>
    <interactant intactId="EBI-4424877">
        <id>Q9S7W5</id>
        <label>TCP13</label>
    </interactant>
    <organismsDiffer>false</organismsDiffer>
    <experiments>3</experiments>
</comment>
<comment type="interaction">
    <interactant intactId="EBI-4459694">
        <id>Q6X7J9</id>
    </interactant>
    <interactant intactId="EBI-4424563">
        <id>Q93Z00</id>
        <label>TCP14</label>
    </interactant>
    <organismsDiffer>false</organismsDiffer>
    <experiments>3</experiments>
</comment>
<comment type="interaction">
    <interactant intactId="EBI-4459694">
        <id>Q6X7J9</id>
    </interactant>
    <interactant intactId="EBI-4426144">
        <id>Q9C9L2</id>
        <label>TCP15</label>
    </interactant>
    <organismsDiffer>false</organismsDiffer>
    <experiments>3</experiments>
</comment>
<comment type="interaction">
    <interactant intactId="EBI-4459694">
        <id>Q6X7J9</id>
    </interactant>
    <interactant intactId="EBI-15198627">
        <id>Q9M1U4</id>
        <label>TCP16</label>
    </interactant>
    <organismsDiffer>false</organismsDiffer>
    <experiments>3</experiments>
</comment>
<comment type="interaction">
    <interactant intactId="EBI-4459694">
        <id>Q6X7J9</id>
    </interactant>
    <interactant intactId="EBI-15192731">
        <id>A1YKT1</id>
        <label>TCP18</label>
    </interactant>
    <organismsDiffer>false</organismsDiffer>
    <experiments>3</experiments>
</comment>
<comment type="interaction">
    <interactant intactId="EBI-4459694">
        <id>Q6X7J9</id>
    </interactant>
    <interactant intactId="EBI-15192325">
        <id>Q8LPR5</id>
        <label>TCP4</label>
    </interactant>
    <organismsDiffer>false</organismsDiffer>
    <experiments>3</experiments>
</comment>
<comment type="interaction">
    <interactant intactId="EBI-4459694">
        <id>Q6X7J9</id>
    </interactant>
    <interactant intactId="EBI-2367993">
        <id>Q9ZSI7</id>
        <label>WRKY47</label>
    </interactant>
    <organismsDiffer>false</organismsDiffer>
    <experiments>3</experiments>
</comment>
<comment type="subcellular location">
    <subcellularLocation>
        <location evidence="1 4">Nucleus</location>
    </subcellularLocation>
</comment>
<comment type="tissue specificity">
    <text evidence="3 4">Expressed in the vasculature of the whole plant (roots, hypocotyls, cotyledons and leaves), trichomes and stomata (PubMed:20729381). Expresse in the developing vascular bundles of root and shoot lateral organs (PubMed:20044450).</text>
</comment>
<comment type="disruption phenotype">
    <text evidence="4 6">No visible phenotype under normal growth conditions (PubMed:20729381). The double mutants wox4 and wox14 exhibit reductions in vascular cell division (PubMed:23578929).</text>
</comment>
<comment type="similarity">
    <text evidence="7">Belongs to the WUS homeobox family.</text>
</comment>
<accession>Q6X7J9</accession>
<accession>Q9C632</accession>
<feature type="chain" id="PRO_0000049370" description="WUSCHEL-related homeobox 4">
    <location>
        <begin position="1"/>
        <end position="251"/>
    </location>
</feature>
<feature type="DNA-binding region" description="Homeobox; WUS-type" evidence="1">
    <location>
        <begin position="86"/>
        <end position="150"/>
    </location>
</feature>
<feature type="region of interest" description="Disordered" evidence="2">
    <location>
        <begin position="1"/>
        <end position="21"/>
    </location>
</feature>
<feature type="region of interest" description="Disordered" evidence="2">
    <location>
        <begin position="33"/>
        <end position="93"/>
    </location>
</feature>
<feature type="compositionally biased region" description="Low complexity" evidence="2">
    <location>
        <begin position="11"/>
        <end position="21"/>
    </location>
</feature>
<feature type="compositionally biased region" description="Basic and acidic residues" evidence="2">
    <location>
        <begin position="71"/>
        <end position="83"/>
    </location>
</feature>
<feature type="sequence conflict" description="In Ref. 2; AAG50620." evidence="7" ref="2">
    <location>
        <begin position="82"/>
        <end position="83"/>
    </location>
</feature>
<name>WOX4_ARATH</name>